<name>SOMA_MELGA</name>
<dbReference type="EMBL" id="M33697">
    <property type="protein sequence ID" value="AAA49628.1"/>
    <property type="molecule type" value="mRNA"/>
</dbReference>
<dbReference type="PIR" id="JC1514">
    <property type="entry name" value="JC1514"/>
</dbReference>
<dbReference type="SMR" id="P22077"/>
<dbReference type="FunCoup" id="P22077">
    <property type="interactions" value="19"/>
</dbReference>
<dbReference type="Ensembl" id="ENSMGAT00000037054.1">
    <property type="protein sequence ID" value="ENSMGAP00000031379.1"/>
    <property type="gene ID" value="ENSMGAG00000008772.3"/>
</dbReference>
<dbReference type="GeneTree" id="ENSGT00950000182818"/>
<dbReference type="InParanoid" id="P22077"/>
<dbReference type="Proteomes" id="UP000001645">
    <property type="component" value="Chromosome 29"/>
</dbReference>
<dbReference type="GO" id="GO:0005615">
    <property type="term" value="C:extracellular space"/>
    <property type="evidence" value="ECO:0007669"/>
    <property type="project" value="InterPro"/>
</dbReference>
<dbReference type="GO" id="GO:0008083">
    <property type="term" value="F:growth factor activity"/>
    <property type="evidence" value="ECO:0007669"/>
    <property type="project" value="TreeGrafter"/>
</dbReference>
<dbReference type="GO" id="GO:0005131">
    <property type="term" value="F:growth hormone receptor binding"/>
    <property type="evidence" value="ECO:0007669"/>
    <property type="project" value="InterPro"/>
</dbReference>
<dbReference type="GO" id="GO:0005179">
    <property type="term" value="F:hormone activity"/>
    <property type="evidence" value="ECO:0007669"/>
    <property type="project" value="UniProtKB-KW"/>
</dbReference>
<dbReference type="GO" id="GO:0046872">
    <property type="term" value="F:metal ion binding"/>
    <property type="evidence" value="ECO:0007669"/>
    <property type="project" value="UniProtKB-KW"/>
</dbReference>
<dbReference type="GO" id="GO:0048018">
    <property type="term" value="F:receptor ligand activity"/>
    <property type="evidence" value="ECO:0000250"/>
    <property type="project" value="AgBase"/>
</dbReference>
<dbReference type="GO" id="GO:0048513">
    <property type="term" value="P:animal organ development"/>
    <property type="evidence" value="ECO:0007669"/>
    <property type="project" value="TreeGrafter"/>
</dbReference>
<dbReference type="GO" id="GO:0060396">
    <property type="term" value="P:growth hormone receptor signaling pathway"/>
    <property type="evidence" value="ECO:0007669"/>
    <property type="project" value="TreeGrafter"/>
</dbReference>
<dbReference type="GO" id="GO:0043066">
    <property type="term" value="P:negative regulation of apoptotic process"/>
    <property type="evidence" value="ECO:0000250"/>
    <property type="project" value="AgBase"/>
</dbReference>
<dbReference type="GO" id="GO:0010629">
    <property type="term" value="P:negative regulation of gene expression"/>
    <property type="evidence" value="ECO:0000250"/>
    <property type="project" value="AgBase"/>
</dbReference>
<dbReference type="GO" id="GO:0035846">
    <property type="term" value="P:oviduct epithelium development"/>
    <property type="evidence" value="ECO:0000250"/>
    <property type="project" value="AgBase"/>
</dbReference>
<dbReference type="GO" id="GO:0010628">
    <property type="term" value="P:positive regulation of gene expression"/>
    <property type="evidence" value="ECO:0000250"/>
    <property type="project" value="AgBase"/>
</dbReference>
<dbReference type="GO" id="GO:0045927">
    <property type="term" value="P:positive regulation of growth"/>
    <property type="evidence" value="ECO:0007669"/>
    <property type="project" value="TreeGrafter"/>
</dbReference>
<dbReference type="GO" id="GO:0046427">
    <property type="term" value="P:positive regulation of receptor signaling pathway via JAK-STAT"/>
    <property type="evidence" value="ECO:0007669"/>
    <property type="project" value="TreeGrafter"/>
</dbReference>
<dbReference type="GO" id="GO:0031667">
    <property type="term" value="P:response to nutrient levels"/>
    <property type="evidence" value="ECO:0007669"/>
    <property type="project" value="TreeGrafter"/>
</dbReference>
<dbReference type="CDD" id="cd10285">
    <property type="entry name" value="somatotropin_like"/>
    <property type="match status" value="1"/>
</dbReference>
<dbReference type="FunFam" id="1.20.1250.10:FF:000002">
    <property type="entry name" value="Growth hormone"/>
    <property type="match status" value="1"/>
</dbReference>
<dbReference type="Gene3D" id="1.20.1250.10">
    <property type="match status" value="1"/>
</dbReference>
<dbReference type="InterPro" id="IPR009079">
    <property type="entry name" value="4_helix_cytokine-like_core"/>
</dbReference>
<dbReference type="InterPro" id="IPR034975">
    <property type="entry name" value="Somatotropin"/>
</dbReference>
<dbReference type="InterPro" id="IPR001400">
    <property type="entry name" value="Somatotropin/Prolactin"/>
</dbReference>
<dbReference type="InterPro" id="IPR018116">
    <property type="entry name" value="Somatotropin_CS"/>
</dbReference>
<dbReference type="PANTHER" id="PTHR11417:SF2">
    <property type="entry name" value="SOMATOTROPIN"/>
    <property type="match status" value="1"/>
</dbReference>
<dbReference type="PANTHER" id="PTHR11417">
    <property type="entry name" value="SOMATOTROPIN,PROLACTIN"/>
    <property type="match status" value="1"/>
</dbReference>
<dbReference type="Pfam" id="PF00103">
    <property type="entry name" value="Hormone_1"/>
    <property type="match status" value="1"/>
</dbReference>
<dbReference type="PRINTS" id="PR00836">
    <property type="entry name" value="SOMATOTROPIN"/>
</dbReference>
<dbReference type="SUPFAM" id="SSF47266">
    <property type="entry name" value="4-helical cytokines"/>
    <property type="match status" value="1"/>
</dbReference>
<dbReference type="PROSITE" id="PS00266">
    <property type="entry name" value="SOMATOTROPIN_1"/>
    <property type="match status" value="1"/>
</dbReference>
<dbReference type="PROSITE" id="PS00338">
    <property type="entry name" value="SOMATOTROPIN_2"/>
    <property type="match status" value="1"/>
</dbReference>
<reference key="1">
    <citation type="journal article" date="1990" name="Biochem. Biophys. Res. Commun.">
        <title>Nucleotide sequence of the complementary DNA for turkey growth hormone.</title>
        <authorList>
            <person name="Foster D.N."/>
            <person name="Kim S.U."/>
            <person name="Enyeart J.J."/>
            <person name="Foster L.K."/>
        </authorList>
    </citation>
    <scope>NUCLEOTIDE SEQUENCE [MRNA]</scope>
    <source>
        <tissue>Pituitary</tissue>
    </source>
</reference>
<reference key="2">
    <citation type="journal article" date="1991" name="Biochem. Biophys. Res. Commun.">
        <authorList>
            <person name="Foster D.N."/>
            <person name="Kim S.U."/>
            <person name="Enyeart J.J."/>
            <person name="Foster L.K."/>
        </authorList>
    </citation>
    <scope>ERRATUM OF PUBMED:2125220</scope>
</reference>
<proteinExistence type="evidence at transcript level"/>
<protein>
    <recommendedName>
        <fullName>Somatotropin</fullName>
    </recommendedName>
    <alternativeName>
        <fullName>Growth hormone</fullName>
    </alternativeName>
</protein>
<gene>
    <name type="primary">GH</name>
</gene>
<keyword id="KW-1015">Disulfide bond</keyword>
<keyword id="KW-0372">Hormone</keyword>
<keyword id="KW-0479">Metal-binding</keyword>
<keyword id="KW-1185">Reference proteome</keyword>
<keyword id="KW-0964">Secreted</keyword>
<keyword id="KW-0732">Signal</keyword>
<keyword id="KW-0862">Zinc</keyword>
<comment type="function">
    <text>Growth hormone plays an important role in growth control.</text>
</comment>
<comment type="subcellular location">
    <subcellularLocation>
        <location>Secreted</location>
    </subcellularLocation>
</comment>
<comment type="tissue specificity">
    <text>Pituitary gland.</text>
</comment>
<comment type="induction">
    <text>By growth hormone releasing factor (GRF).</text>
</comment>
<comment type="similarity">
    <text evidence="2">Belongs to the somatotropin/prolactin family.</text>
</comment>
<sequence length="216" mass="24747">MAPGSWFSPLLIAVVTLGLPQGAAATFPTMPLSNLFTNAVLRAQHLHLLAAETYKEFERTYIPEDQRYTNKNSQAAFCYSETIPAPTGKDDAQQKSDMELLRFSLVLIQSWLTPMQYLSKVFTNNLVFGTSDRVFEKLKDLEEGIQALMRELEDRSPRGPQLLRPTYDRFDIHLRSEDALLKNYGLLSCFKKDLHKVETYLKVMKCRRFGESNCNI</sequence>
<organism>
    <name type="scientific">Meleagris gallopavo</name>
    <name type="common">Wild turkey</name>
    <dbReference type="NCBI Taxonomy" id="9103"/>
    <lineage>
        <taxon>Eukaryota</taxon>
        <taxon>Metazoa</taxon>
        <taxon>Chordata</taxon>
        <taxon>Craniata</taxon>
        <taxon>Vertebrata</taxon>
        <taxon>Euteleostomi</taxon>
        <taxon>Archelosauria</taxon>
        <taxon>Archosauria</taxon>
        <taxon>Dinosauria</taxon>
        <taxon>Saurischia</taxon>
        <taxon>Theropoda</taxon>
        <taxon>Coelurosauria</taxon>
        <taxon>Aves</taxon>
        <taxon>Neognathae</taxon>
        <taxon>Galloanserae</taxon>
        <taxon>Galliformes</taxon>
        <taxon>Phasianidae</taxon>
        <taxon>Meleagridinae</taxon>
        <taxon>Meleagris</taxon>
    </lineage>
</organism>
<feature type="signal peptide" evidence="1">
    <location>
        <begin position="1"/>
        <end position="25"/>
    </location>
</feature>
<feature type="chain" id="PRO_0000033005" description="Somatotropin">
    <location>
        <begin position="26"/>
        <end position="216"/>
    </location>
</feature>
<feature type="binding site" evidence="1">
    <location>
        <position position="45"/>
    </location>
    <ligand>
        <name>Zn(2+)</name>
        <dbReference type="ChEBI" id="CHEBI:29105"/>
    </ligand>
</feature>
<feature type="binding site" evidence="1">
    <location>
        <position position="198"/>
    </location>
    <ligand>
        <name>Zn(2+)</name>
        <dbReference type="ChEBI" id="CHEBI:29105"/>
    </ligand>
</feature>
<feature type="disulfide bond" evidence="1">
    <location>
        <begin position="78"/>
        <end position="189"/>
    </location>
</feature>
<feature type="disulfide bond" evidence="1">
    <location>
        <begin position="206"/>
        <end position="214"/>
    </location>
</feature>
<accession>P22077</accession>
<evidence type="ECO:0000250" key="1"/>
<evidence type="ECO:0000305" key="2"/>